<proteinExistence type="evidence at transcript level"/>
<organism>
    <name type="scientific">Cyriopagopus hainanus</name>
    <name type="common">Chinese bird spider</name>
    <name type="synonym">Haplopelma hainanum</name>
    <dbReference type="NCBI Taxonomy" id="209901"/>
    <lineage>
        <taxon>Eukaryota</taxon>
        <taxon>Metazoa</taxon>
        <taxon>Ecdysozoa</taxon>
        <taxon>Arthropoda</taxon>
        <taxon>Chelicerata</taxon>
        <taxon>Arachnida</taxon>
        <taxon>Araneae</taxon>
        <taxon>Mygalomorphae</taxon>
        <taxon>Theraphosidae</taxon>
        <taxon>Haplopelma</taxon>
    </lineage>
</organism>
<reference key="1">
    <citation type="journal article" date="2010" name="J. Proteome Res.">
        <title>Molecular diversification of peptide toxins from the tarantula Haplopelma hainanum (Ornithoctonus hainana) venom based on transcriptomic, peptidomic, and genomic analyses.</title>
        <authorList>
            <person name="Tang X."/>
            <person name="Zhang Y."/>
            <person name="Hu W."/>
            <person name="Xu D."/>
            <person name="Tao H."/>
            <person name="Yang X."/>
            <person name="Li Y."/>
            <person name="Jiang L."/>
            <person name="Liang S."/>
        </authorList>
    </citation>
    <scope>NUCLEOTIDE SEQUENCE [LARGE SCALE MRNA]</scope>
    <source>
        <tissue>Venom gland</tissue>
    </source>
</reference>
<comment type="function">
    <text evidence="1">Ion channel inhibitor.</text>
</comment>
<comment type="subcellular location">
    <subcellularLocation>
        <location evidence="1">Secreted</location>
    </subcellularLocation>
</comment>
<comment type="tissue specificity">
    <text>Expressed by the venom gland.</text>
</comment>
<comment type="domain">
    <text evidence="1">The presence of a 'disulfide through disulfide knot' structurally defines this protein as a knottin.</text>
</comment>
<comment type="similarity">
    <text evidence="4">Belongs to the neurotoxin 10 (Hwtx-1) family. 51 (Hntx-8) subfamily. Hntx-8 sub-subfamily.</text>
</comment>
<accession>D2Y244</accession>
<keyword id="KW-1015">Disulfide bond</keyword>
<keyword id="KW-0872">Ion channel impairing toxin</keyword>
<keyword id="KW-0960">Knottin</keyword>
<keyword id="KW-0964">Secreted</keyword>
<keyword id="KW-0732">Signal</keyword>
<keyword id="KW-0800">Toxin</keyword>
<feature type="signal peptide" evidence="3">
    <location>
        <begin position="1"/>
        <end position="24"/>
    </location>
</feature>
<feature type="propeptide" id="PRO_0000400617" evidence="1">
    <location>
        <begin position="25"/>
        <end position="52"/>
    </location>
</feature>
<feature type="peptide" id="PRO_0000400618" description="U3-theraphotoxin-Hhn1j">
    <location>
        <begin position="53"/>
        <end position="87"/>
    </location>
</feature>
<feature type="disulfide bond" evidence="2">
    <location>
        <begin position="54"/>
        <end position="67"/>
    </location>
</feature>
<feature type="disulfide bond" evidence="2">
    <location>
        <begin position="61"/>
        <end position="72"/>
    </location>
</feature>
<feature type="disulfide bond" evidence="2">
    <location>
        <begin position="66"/>
        <end position="79"/>
    </location>
</feature>
<name>H8B01_CYRHA</name>
<sequence length="87" mass="10129">MVNMKASMFLTFAGLVLLFVVCYASESEEKEFPKEMLSSIFAVDNDFKQEERDCAGYMRECKEKLCCSGYVCSSRWKWCVSPAPWRR</sequence>
<dbReference type="EMBL" id="GU292921">
    <property type="protein sequence ID" value="ADB56737.1"/>
    <property type="molecule type" value="mRNA"/>
</dbReference>
<dbReference type="SMR" id="D2Y244"/>
<dbReference type="ArachnoServer" id="AS001579">
    <property type="toxin name" value="U3-theraphotoxin-Hhn1j"/>
</dbReference>
<dbReference type="GO" id="GO:0005576">
    <property type="term" value="C:extracellular region"/>
    <property type="evidence" value="ECO:0007669"/>
    <property type="project" value="UniProtKB-SubCell"/>
</dbReference>
<dbReference type="GO" id="GO:0008200">
    <property type="term" value="F:ion channel inhibitor activity"/>
    <property type="evidence" value="ECO:0007669"/>
    <property type="project" value="InterPro"/>
</dbReference>
<dbReference type="GO" id="GO:0090729">
    <property type="term" value="F:toxin activity"/>
    <property type="evidence" value="ECO:0007669"/>
    <property type="project" value="UniProtKB-KW"/>
</dbReference>
<dbReference type="InterPro" id="IPR011696">
    <property type="entry name" value="Huwentoxin-1"/>
</dbReference>
<dbReference type="InterPro" id="IPR013140">
    <property type="entry name" value="Huwentoxin_CS1"/>
</dbReference>
<dbReference type="Pfam" id="PF07740">
    <property type="entry name" value="Toxin_12"/>
    <property type="match status" value="1"/>
</dbReference>
<dbReference type="SUPFAM" id="SSF57059">
    <property type="entry name" value="omega toxin-like"/>
    <property type="match status" value="1"/>
</dbReference>
<dbReference type="PROSITE" id="PS60021">
    <property type="entry name" value="HWTX_1"/>
    <property type="match status" value="1"/>
</dbReference>
<evidence type="ECO:0000250" key="1"/>
<evidence type="ECO:0000250" key="2">
    <source>
        <dbReference type="UniProtKB" id="B3FIS6"/>
    </source>
</evidence>
<evidence type="ECO:0000255" key="3"/>
<evidence type="ECO:0000305" key="4"/>
<protein>
    <recommendedName>
        <fullName>U3-theraphotoxin-Hhn1j</fullName>
        <shortName>U3-TRTX-Hhn1j</shortName>
    </recommendedName>
    <alternativeName>
        <fullName>Hainantoxin-VIII-2</fullName>
        <shortName>HNTX-VIII-2</shortName>
    </alternativeName>
</protein>